<reference key="1">
    <citation type="submission" date="1994-12" db="EMBL/GenBank/DDBJ databases">
        <authorList>
            <person name="Xiang H."/>
            <person name="McIntosh M.A."/>
        </authorList>
    </citation>
    <scope>NUCLEOTIDE SEQUENCE [GENOMIC DNA]</scope>
</reference>
<dbReference type="EC" id="5.3.1.1" evidence="1"/>
<dbReference type="EMBL" id="L33479">
    <property type="protein sequence ID" value="AAA83218.1"/>
    <property type="molecule type" value="Genomic_DNA"/>
</dbReference>
<dbReference type="RefSeq" id="WP_013301991.1">
    <property type="nucleotide sequence ID" value="NZ_QQSM01000089.1"/>
</dbReference>
<dbReference type="SMR" id="P50919"/>
<dbReference type="GeneID" id="93248307"/>
<dbReference type="PATRIC" id="fig|2100.18.peg.175"/>
<dbReference type="OMA" id="NWKMHMT"/>
<dbReference type="UniPathway" id="UPA00109">
    <property type="reaction ID" value="UER00189"/>
</dbReference>
<dbReference type="UniPathway" id="UPA00138"/>
<dbReference type="GO" id="GO:0005829">
    <property type="term" value="C:cytosol"/>
    <property type="evidence" value="ECO:0007669"/>
    <property type="project" value="TreeGrafter"/>
</dbReference>
<dbReference type="GO" id="GO:0004807">
    <property type="term" value="F:triose-phosphate isomerase activity"/>
    <property type="evidence" value="ECO:0007669"/>
    <property type="project" value="UniProtKB-UniRule"/>
</dbReference>
<dbReference type="GO" id="GO:0006094">
    <property type="term" value="P:gluconeogenesis"/>
    <property type="evidence" value="ECO:0007669"/>
    <property type="project" value="UniProtKB-UniRule"/>
</dbReference>
<dbReference type="GO" id="GO:0046166">
    <property type="term" value="P:glyceraldehyde-3-phosphate biosynthetic process"/>
    <property type="evidence" value="ECO:0007669"/>
    <property type="project" value="TreeGrafter"/>
</dbReference>
<dbReference type="GO" id="GO:0019563">
    <property type="term" value="P:glycerol catabolic process"/>
    <property type="evidence" value="ECO:0007669"/>
    <property type="project" value="TreeGrafter"/>
</dbReference>
<dbReference type="GO" id="GO:0006096">
    <property type="term" value="P:glycolytic process"/>
    <property type="evidence" value="ECO:0007669"/>
    <property type="project" value="UniProtKB-UniRule"/>
</dbReference>
<dbReference type="CDD" id="cd00311">
    <property type="entry name" value="TIM"/>
    <property type="match status" value="1"/>
</dbReference>
<dbReference type="FunFam" id="3.20.20.70:FF:000016">
    <property type="entry name" value="Triosephosphate isomerase"/>
    <property type="match status" value="1"/>
</dbReference>
<dbReference type="Gene3D" id="3.20.20.70">
    <property type="entry name" value="Aldolase class I"/>
    <property type="match status" value="1"/>
</dbReference>
<dbReference type="HAMAP" id="MF_00147_B">
    <property type="entry name" value="TIM_B"/>
    <property type="match status" value="1"/>
</dbReference>
<dbReference type="InterPro" id="IPR013785">
    <property type="entry name" value="Aldolase_TIM"/>
</dbReference>
<dbReference type="InterPro" id="IPR035990">
    <property type="entry name" value="TIM_sf"/>
</dbReference>
<dbReference type="InterPro" id="IPR022896">
    <property type="entry name" value="TrioseP_Isoase_bac/euk"/>
</dbReference>
<dbReference type="InterPro" id="IPR000652">
    <property type="entry name" value="Triosephosphate_isomerase"/>
</dbReference>
<dbReference type="InterPro" id="IPR020861">
    <property type="entry name" value="Triosephosphate_isomerase_AS"/>
</dbReference>
<dbReference type="NCBIfam" id="TIGR00419">
    <property type="entry name" value="tim"/>
    <property type="match status" value="1"/>
</dbReference>
<dbReference type="PANTHER" id="PTHR21139">
    <property type="entry name" value="TRIOSEPHOSPHATE ISOMERASE"/>
    <property type="match status" value="1"/>
</dbReference>
<dbReference type="PANTHER" id="PTHR21139:SF42">
    <property type="entry name" value="TRIOSEPHOSPHATE ISOMERASE"/>
    <property type="match status" value="1"/>
</dbReference>
<dbReference type="Pfam" id="PF00121">
    <property type="entry name" value="TIM"/>
    <property type="match status" value="1"/>
</dbReference>
<dbReference type="SUPFAM" id="SSF51351">
    <property type="entry name" value="Triosephosphate isomerase (TIM)"/>
    <property type="match status" value="1"/>
</dbReference>
<dbReference type="PROSITE" id="PS00171">
    <property type="entry name" value="TIM_1"/>
    <property type="match status" value="1"/>
</dbReference>
<dbReference type="PROSITE" id="PS51440">
    <property type="entry name" value="TIM_2"/>
    <property type="match status" value="1"/>
</dbReference>
<feature type="chain" id="PRO_0000090248" description="Triosephosphate isomerase">
    <location>
        <begin position="1"/>
        <end position="243"/>
    </location>
</feature>
<feature type="active site" description="Electrophile" evidence="1">
    <location>
        <position position="98"/>
    </location>
</feature>
<feature type="active site" description="Proton acceptor" evidence="1">
    <location>
        <position position="167"/>
    </location>
</feature>
<feature type="binding site" evidence="1">
    <location>
        <begin position="9"/>
        <end position="11"/>
    </location>
    <ligand>
        <name>substrate</name>
    </ligand>
</feature>
<feature type="binding site" evidence="1">
    <location>
        <position position="173"/>
    </location>
    <ligand>
        <name>substrate</name>
    </ligand>
</feature>
<feature type="binding site" evidence="1">
    <location>
        <position position="205"/>
    </location>
    <ligand>
        <name>substrate</name>
    </ligand>
</feature>
<feature type="binding site" evidence="1">
    <location>
        <begin position="226"/>
        <end position="227"/>
    </location>
    <ligand>
        <name>substrate</name>
    </ligand>
</feature>
<proteinExistence type="inferred from homology"/>
<comment type="function">
    <text evidence="1">Involved in the gluconeogenesis. Catalyzes stereospecifically the conversion of dihydroxyacetone phosphate (DHAP) to D-glyceraldehyde-3-phosphate (G3P).</text>
</comment>
<comment type="catalytic activity">
    <reaction evidence="1">
        <text>D-glyceraldehyde 3-phosphate = dihydroxyacetone phosphate</text>
        <dbReference type="Rhea" id="RHEA:18585"/>
        <dbReference type="ChEBI" id="CHEBI:57642"/>
        <dbReference type="ChEBI" id="CHEBI:59776"/>
        <dbReference type="EC" id="5.3.1.1"/>
    </reaction>
</comment>
<comment type="pathway">
    <text evidence="1">Carbohydrate biosynthesis; gluconeogenesis.</text>
</comment>
<comment type="pathway">
    <text evidence="1">Carbohydrate degradation; glycolysis; D-glyceraldehyde 3-phosphate from glycerone phosphate: step 1/1.</text>
</comment>
<comment type="subunit">
    <text evidence="1">Homodimer.</text>
</comment>
<comment type="subcellular location">
    <subcellularLocation>
        <location evidence="1">Cytoplasm</location>
    </subcellularLocation>
</comment>
<comment type="similarity">
    <text evidence="1">Belongs to the triosephosphate isomerase family.</text>
</comment>
<evidence type="ECO:0000255" key="1">
    <source>
        <dbReference type="HAMAP-Rule" id="MF_00147"/>
    </source>
</evidence>
<protein>
    <recommendedName>
        <fullName evidence="1">Triosephosphate isomerase</fullName>
        <shortName evidence="1">TIM</shortName>
        <shortName evidence="1">TPI</shortName>
        <ecNumber evidence="1">5.3.1.1</ecNumber>
    </recommendedName>
    <alternativeName>
        <fullName evidence="1">Triose-phosphate isomerase</fullName>
    </alternativeName>
</protein>
<gene>
    <name evidence="1" type="primary">tpiA</name>
    <name type="synonym">tpi</name>
</gene>
<name>TPIS_MESHY</name>
<accession>P50919</accession>
<sequence length="243" mass="27195">MSKTIIIGNWKMNKTFTQTKEFFSAFNQLYIENKNKINQNLDFAVALPAINVAAFSKNTTKLELAVQNMSQFEKGAYTGEISAQMLLDLNVKYAIIGHSERRQYFKETDLDVNAKTQQAIKNNIIPVVCVGETLEEYEAQKTSQVIEYQLKNSLKDVDLSKVIVAYEPIWAIGTGKTATPEQAQQVCKFIRKQTNKNLTILYGGSVSQENIEQLLNQADINGALVGGASLKVDSFIKLLTLNK</sequence>
<organism>
    <name type="scientific">Mesomycoplasma hyorhinis</name>
    <name type="common">Mycoplasma hyorhinis</name>
    <dbReference type="NCBI Taxonomy" id="2100"/>
    <lineage>
        <taxon>Bacteria</taxon>
        <taxon>Bacillati</taxon>
        <taxon>Mycoplasmatota</taxon>
        <taxon>Mycoplasmoidales</taxon>
        <taxon>Metamycoplasmataceae</taxon>
        <taxon>Mesomycoplasma</taxon>
    </lineage>
</organism>
<keyword id="KW-0963">Cytoplasm</keyword>
<keyword id="KW-0312">Gluconeogenesis</keyword>
<keyword id="KW-0324">Glycolysis</keyword>
<keyword id="KW-0413">Isomerase</keyword>